<protein>
    <recommendedName>
        <fullName evidence="1">Small ribosomal subunit protein uS17</fullName>
    </recommendedName>
    <alternativeName>
        <fullName evidence="2">30S ribosomal protein S17</fullName>
    </alternativeName>
</protein>
<dbReference type="EMBL" id="CP000703">
    <property type="protein sequence ID" value="ABQ50048.1"/>
    <property type="molecule type" value="Genomic_DNA"/>
</dbReference>
<dbReference type="RefSeq" id="WP_000004086.1">
    <property type="nucleotide sequence ID" value="NC_009487.1"/>
</dbReference>
<dbReference type="SMR" id="A5IV25"/>
<dbReference type="GeneID" id="98346553"/>
<dbReference type="KEGG" id="saj:SaurJH9_2268"/>
<dbReference type="HOGENOM" id="CLU_073626_1_0_9"/>
<dbReference type="GO" id="GO:0022627">
    <property type="term" value="C:cytosolic small ribosomal subunit"/>
    <property type="evidence" value="ECO:0007669"/>
    <property type="project" value="TreeGrafter"/>
</dbReference>
<dbReference type="GO" id="GO:0019843">
    <property type="term" value="F:rRNA binding"/>
    <property type="evidence" value="ECO:0007669"/>
    <property type="project" value="UniProtKB-UniRule"/>
</dbReference>
<dbReference type="GO" id="GO:0003735">
    <property type="term" value="F:structural constituent of ribosome"/>
    <property type="evidence" value="ECO:0007669"/>
    <property type="project" value="InterPro"/>
</dbReference>
<dbReference type="GO" id="GO:0006412">
    <property type="term" value="P:translation"/>
    <property type="evidence" value="ECO:0007669"/>
    <property type="project" value="UniProtKB-UniRule"/>
</dbReference>
<dbReference type="CDD" id="cd00364">
    <property type="entry name" value="Ribosomal_uS17"/>
    <property type="match status" value="1"/>
</dbReference>
<dbReference type="FunFam" id="2.40.50.140:FF:000026">
    <property type="entry name" value="30S ribosomal protein S17"/>
    <property type="match status" value="1"/>
</dbReference>
<dbReference type="Gene3D" id="2.40.50.140">
    <property type="entry name" value="Nucleic acid-binding proteins"/>
    <property type="match status" value="1"/>
</dbReference>
<dbReference type="HAMAP" id="MF_01345_B">
    <property type="entry name" value="Ribosomal_uS17_B"/>
    <property type="match status" value="1"/>
</dbReference>
<dbReference type="InterPro" id="IPR012340">
    <property type="entry name" value="NA-bd_OB-fold"/>
</dbReference>
<dbReference type="InterPro" id="IPR000266">
    <property type="entry name" value="Ribosomal_uS17"/>
</dbReference>
<dbReference type="InterPro" id="IPR019984">
    <property type="entry name" value="Ribosomal_uS17_bact/chlr"/>
</dbReference>
<dbReference type="InterPro" id="IPR019979">
    <property type="entry name" value="Ribosomal_uS17_CS"/>
</dbReference>
<dbReference type="NCBIfam" id="NF004123">
    <property type="entry name" value="PRK05610.1"/>
    <property type="match status" value="1"/>
</dbReference>
<dbReference type="NCBIfam" id="TIGR03635">
    <property type="entry name" value="uS17_bact"/>
    <property type="match status" value="1"/>
</dbReference>
<dbReference type="PANTHER" id="PTHR10744">
    <property type="entry name" value="40S RIBOSOMAL PROTEIN S11 FAMILY MEMBER"/>
    <property type="match status" value="1"/>
</dbReference>
<dbReference type="PANTHER" id="PTHR10744:SF1">
    <property type="entry name" value="SMALL RIBOSOMAL SUBUNIT PROTEIN US17M"/>
    <property type="match status" value="1"/>
</dbReference>
<dbReference type="Pfam" id="PF00366">
    <property type="entry name" value="Ribosomal_S17"/>
    <property type="match status" value="1"/>
</dbReference>
<dbReference type="PRINTS" id="PR00973">
    <property type="entry name" value="RIBOSOMALS17"/>
</dbReference>
<dbReference type="SUPFAM" id="SSF50249">
    <property type="entry name" value="Nucleic acid-binding proteins"/>
    <property type="match status" value="1"/>
</dbReference>
<dbReference type="PROSITE" id="PS00056">
    <property type="entry name" value="RIBOSOMAL_S17"/>
    <property type="match status" value="1"/>
</dbReference>
<evidence type="ECO:0000255" key="1">
    <source>
        <dbReference type="HAMAP-Rule" id="MF_01345"/>
    </source>
</evidence>
<evidence type="ECO:0000305" key="2"/>
<name>RS17_STAA9</name>
<gene>
    <name evidence="1" type="primary">rpsQ</name>
    <name type="ordered locus">SaurJH9_2268</name>
</gene>
<accession>A5IV25</accession>
<organism>
    <name type="scientific">Staphylococcus aureus (strain JH9)</name>
    <dbReference type="NCBI Taxonomy" id="359786"/>
    <lineage>
        <taxon>Bacteria</taxon>
        <taxon>Bacillati</taxon>
        <taxon>Bacillota</taxon>
        <taxon>Bacilli</taxon>
        <taxon>Bacillales</taxon>
        <taxon>Staphylococcaceae</taxon>
        <taxon>Staphylococcus</taxon>
    </lineage>
</organism>
<proteinExistence type="inferred from homology"/>
<feature type="chain" id="PRO_1000086861" description="Small ribosomal subunit protein uS17">
    <location>
        <begin position="1"/>
        <end position="87"/>
    </location>
</feature>
<sequence length="87" mass="10175">MSERNDRKVYVGKVVSDKMDKTITVLVETYKTHKLYGKRVKYSKKYKTHDENNSAKLGDIVKIQETRPLSATKRFRLVEIVEESVII</sequence>
<reference key="1">
    <citation type="submission" date="2007-05" db="EMBL/GenBank/DDBJ databases">
        <title>Complete sequence of chromosome of Staphylococcus aureus subsp. aureus JH9.</title>
        <authorList>
            <consortium name="US DOE Joint Genome Institute"/>
            <person name="Copeland A."/>
            <person name="Lucas S."/>
            <person name="Lapidus A."/>
            <person name="Barry K."/>
            <person name="Detter J.C."/>
            <person name="Glavina del Rio T."/>
            <person name="Hammon N."/>
            <person name="Israni S."/>
            <person name="Pitluck S."/>
            <person name="Chain P."/>
            <person name="Malfatti S."/>
            <person name="Shin M."/>
            <person name="Vergez L."/>
            <person name="Schmutz J."/>
            <person name="Larimer F."/>
            <person name="Land M."/>
            <person name="Hauser L."/>
            <person name="Kyrpides N."/>
            <person name="Kim E."/>
            <person name="Tomasz A."/>
            <person name="Richardson P."/>
        </authorList>
    </citation>
    <scope>NUCLEOTIDE SEQUENCE [LARGE SCALE GENOMIC DNA]</scope>
    <source>
        <strain>JH9</strain>
    </source>
</reference>
<keyword id="KW-0687">Ribonucleoprotein</keyword>
<keyword id="KW-0689">Ribosomal protein</keyword>
<keyword id="KW-0694">RNA-binding</keyword>
<keyword id="KW-0699">rRNA-binding</keyword>
<comment type="function">
    <text evidence="1">One of the primary rRNA binding proteins, it binds specifically to the 5'-end of 16S ribosomal RNA.</text>
</comment>
<comment type="subunit">
    <text evidence="1">Part of the 30S ribosomal subunit.</text>
</comment>
<comment type="similarity">
    <text evidence="1">Belongs to the universal ribosomal protein uS17 family.</text>
</comment>